<evidence type="ECO:0000255" key="1">
    <source>
        <dbReference type="HAMAP-Rule" id="MF_00300"/>
    </source>
</evidence>
<evidence type="ECO:0000256" key="2">
    <source>
        <dbReference type="SAM" id="MobiDB-lite"/>
    </source>
</evidence>
<reference key="1">
    <citation type="journal article" date="2006" name="J. Bacteriol.">
        <title>Genome sequence of Aeromonas hydrophila ATCC 7966T: jack of all trades.</title>
        <authorList>
            <person name="Seshadri R."/>
            <person name="Joseph S.W."/>
            <person name="Chopra A.K."/>
            <person name="Sha J."/>
            <person name="Shaw J."/>
            <person name="Graf J."/>
            <person name="Haft D.H."/>
            <person name="Wu M."/>
            <person name="Ren Q."/>
            <person name="Rosovitz M.J."/>
            <person name="Madupu R."/>
            <person name="Tallon L."/>
            <person name="Kim M."/>
            <person name="Jin S."/>
            <person name="Vuong H."/>
            <person name="Stine O.C."/>
            <person name="Ali A."/>
            <person name="Horneman A.J."/>
            <person name="Heidelberg J.F."/>
        </authorList>
    </citation>
    <scope>NUCLEOTIDE SEQUENCE [LARGE SCALE GENOMIC DNA]</scope>
    <source>
        <strain>ATCC 7966 / DSM 30187 / BCRC 13018 / CCUG 14551 / JCM 1027 / KCTC 2358 / NCIMB 9240 / NCTC 8049</strain>
    </source>
</reference>
<proteinExistence type="inferred from homology"/>
<gene>
    <name evidence="1" type="primary">aroC</name>
    <name type="ordered locus">AHA_2355</name>
</gene>
<organism>
    <name type="scientific">Aeromonas hydrophila subsp. hydrophila (strain ATCC 7966 / DSM 30187 / BCRC 13018 / CCUG 14551 / JCM 1027 / KCTC 2358 / NCIMB 9240 / NCTC 8049)</name>
    <dbReference type="NCBI Taxonomy" id="380703"/>
    <lineage>
        <taxon>Bacteria</taxon>
        <taxon>Pseudomonadati</taxon>
        <taxon>Pseudomonadota</taxon>
        <taxon>Gammaproteobacteria</taxon>
        <taxon>Aeromonadales</taxon>
        <taxon>Aeromonadaceae</taxon>
        <taxon>Aeromonas</taxon>
    </lineage>
</organism>
<accession>A0KKS7</accession>
<name>AROC_AERHH</name>
<keyword id="KW-0028">Amino-acid biosynthesis</keyword>
<keyword id="KW-0057">Aromatic amino acid biosynthesis</keyword>
<keyword id="KW-0274">FAD</keyword>
<keyword id="KW-0285">Flavoprotein</keyword>
<keyword id="KW-0288">FMN</keyword>
<keyword id="KW-0456">Lyase</keyword>
<keyword id="KW-0521">NADP</keyword>
<keyword id="KW-1185">Reference proteome</keyword>
<protein>
    <recommendedName>
        <fullName evidence="1">Chorismate synthase</fullName>
        <shortName evidence="1">CS</shortName>
        <ecNumber evidence="1">4.2.3.5</ecNumber>
    </recommendedName>
    <alternativeName>
        <fullName evidence="1">5-enolpyruvylshikimate-3-phosphate phospholyase</fullName>
    </alternativeName>
</protein>
<sequence length="362" mass="38854">MAGNSFGQLFRVTTFGESHGLALGAVVDGCPPGLEISEADLQGDLDRRKPGTSRYTTPRREPDEVKILSGVFEGKTTGTSIGLLIENTDQRSKDYSDIKDLFRPGHADYTYHQKYGQRDYRGGGRSSARETAMRVAAGAIAKKYLKQVHGIEITGFLSQLGPIKAEAFDAAQIEQNPFFFPDAGKLEALDQYMRDLKKEGNSIGAKVQVIASNVPVGLGEPVFDRLDADIAHAMMGINAVKGVEIGDGFAVVEQKGSEHRDEMTPAGFASNHAGGILGGISSGQDIVVSMALKPTSSITVPGKTITTEGEATEMITKGRHDPCVGIRAVPIAEAMLALVLMDHLLRHRAQNQGVLTHTPQLR</sequence>
<comment type="function">
    <text evidence="1">Catalyzes the anti-1,4-elimination of the C-3 phosphate and the C-6 proR hydrogen from 5-enolpyruvylshikimate-3-phosphate (EPSP) to yield chorismate, which is the branch point compound that serves as the starting substrate for the three terminal pathways of aromatic amino acid biosynthesis. This reaction introduces a second double bond into the aromatic ring system.</text>
</comment>
<comment type="catalytic activity">
    <reaction evidence="1">
        <text>5-O-(1-carboxyvinyl)-3-phosphoshikimate = chorismate + phosphate</text>
        <dbReference type="Rhea" id="RHEA:21020"/>
        <dbReference type="ChEBI" id="CHEBI:29748"/>
        <dbReference type="ChEBI" id="CHEBI:43474"/>
        <dbReference type="ChEBI" id="CHEBI:57701"/>
        <dbReference type="EC" id="4.2.3.5"/>
    </reaction>
</comment>
<comment type="cofactor">
    <cofactor evidence="1">
        <name>FMNH2</name>
        <dbReference type="ChEBI" id="CHEBI:57618"/>
    </cofactor>
    <text evidence="1">Reduced FMN (FMNH(2)).</text>
</comment>
<comment type="pathway">
    <text evidence="1">Metabolic intermediate biosynthesis; chorismate biosynthesis; chorismate from D-erythrose 4-phosphate and phosphoenolpyruvate: step 7/7.</text>
</comment>
<comment type="subunit">
    <text evidence="1">Homotetramer.</text>
</comment>
<comment type="similarity">
    <text evidence="1">Belongs to the chorismate synthase family.</text>
</comment>
<feature type="chain" id="PRO_1000022457" description="Chorismate synthase">
    <location>
        <begin position="1"/>
        <end position="362"/>
    </location>
</feature>
<feature type="region of interest" description="Disordered" evidence="2">
    <location>
        <begin position="39"/>
        <end position="59"/>
    </location>
</feature>
<feature type="binding site" evidence="1">
    <location>
        <position position="48"/>
    </location>
    <ligand>
        <name>NADP(+)</name>
        <dbReference type="ChEBI" id="CHEBI:58349"/>
    </ligand>
</feature>
<feature type="binding site" evidence="1">
    <location>
        <position position="54"/>
    </location>
    <ligand>
        <name>NADP(+)</name>
        <dbReference type="ChEBI" id="CHEBI:58349"/>
    </ligand>
</feature>
<feature type="binding site" evidence="1">
    <location>
        <begin position="125"/>
        <end position="127"/>
    </location>
    <ligand>
        <name>FMN</name>
        <dbReference type="ChEBI" id="CHEBI:58210"/>
    </ligand>
</feature>
<feature type="binding site" evidence="1">
    <location>
        <begin position="238"/>
        <end position="239"/>
    </location>
    <ligand>
        <name>FMN</name>
        <dbReference type="ChEBI" id="CHEBI:58210"/>
    </ligand>
</feature>
<feature type="binding site" evidence="1">
    <location>
        <position position="278"/>
    </location>
    <ligand>
        <name>FMN</name>
        <dbReference type="ChEBI" id="CHEBI:58210"/>
    </ligand>
</feature>
<feature type="binding site" evidence="1">
    <location>
        <begin position="293"/>
        <end position="297"/>
    </location>
    <ligand>
        <name>FMN</name>
        <dbReference type="ChEBI" id="CHEBI:58210"/>
    </ligand>
</feature>
<feature type="binding site" evidence="1">
    <location>
        <position position="319"/>
    </location>
    <ligand>
        <name>FMN</name>
        <dbReference type="ChEBI" id="CHEBI:58210"/>
    </ligand>
</feature>
<dbReference type="EC" id="4.2.3.5" evidence="1"/>
<dbReference type="EMBL" id="CP000462">
    <property type="protein sequence ID" value="ABK36641.1"/>
    <property type="molecule type" value="Genomic_DNA"/>
</dbReference>
<dbReference type="RefSeq" id="WP_011706197.1">
    <property type="nucleotide sequence ID" value="NC_008570.1"/>
</dbReference>
<dbReference type="RefSeq" id="YP_856878.1">
    <property type="nucleotide sequence ID" value="NC_008570.1"/>
</dbReference>
<dbReference type="SMR" id="A0KKS7"/>
<dbReference type="STRING" id="380703.AHA_2355"/>
<dbReference type="EnsemblBacteria" id="ABK36641">
    <property type="protein sequence ID" value="ABK36641"/>
    <property type="gene ID" value="AHA_2355"/>
</dbReference>
<dbReference type="GeneID" id="4489377"/>
<dbReference type="KEGG" id="aha:AHA_2355"/>
<dbReference type="PATRIC" id="fig|380703.7.peg.2357"/>
<dbReference type="eggNOG" id="COG0082">
    <property type="taxonomic scope" value="Bacteria"/>
</dbReference>
<dbReference type="HOGENOM" id="CLU_034547_0_2_6"/>
<dbReference type="OrthoDB" id="9771806at2"/>
<dbReference type="UniPathway" id="UPA00053">
    <property type="reaction ID" value="UER00090"/>
</dbReference>
<dbReference type="Proteomes" id="UP000000756">
    <property type="component" value="Chromosome"/>
</dbReference>
<dbReference type="GO" id="GO:0005829">
    <property type="term" value="C:cytosol"/>
    <property type="evidence" value="ECO:0007669"/>
    <property type="project" value="TreeGrafter"/>
</dbReference>
<dbReference type="GO" id="GO:0004107">
    <property type="term" value="F:chorismate synthase activity"/>
    <property type="evidence" value="ECO:0007669"/>
    <property type="project" value="UniProtKB-UniRule"/>
</dbReference>
<dbReference type="GO" id="GO:0010181">
    <property type="term" value="F:FMN binding"/>
    <property type="evidence" value="ECO:0007669"/>
    <property type="project" value="TreeGrafter"/>
</dbReference>
<dbReference type="GO" id="GO:0008652">
    <property type="term" value="P:amino acid biosynthetic process"/>
    <property type="evidence" value="ECO:0007669"/>
    <property type="project" value="UniProtKB-KW"/>
</dbReference>
<dbReference type="GO" id="GO:0009073">
    <property type="term" value="P:aromatic amino acid family biosynthetic process"/>
    <property type="evidence" value="ECO:0007669"/>
    <property type="project" value="UniProtKB-KW"/>
</dbReference>
<dbReference type="GO" id="GO:0009423">
    <property type="term" value="P:chorismate biosynthetic process"/>
    <property type="evidence" value="ECO:0007669"/>
    <property type="project" value="UniProtKB-UniRule"/>
</dbReference>
<dbReference type="CDD" id="cd07304">
    <property type="entry name" value="Chorismate_synthase"/>
    <property type="match status" value="1"/>
</dbReference>
<dbReference type="FunFam" id="3.60.150.10:FF:000001">
    <property type="entry name" value="Chorismate synthase"/>
    <property type="match status" value="1"/>
</dbReference>
<dbReference type="Gene3D" id="3.60.150.10">
    <property type="entry name" value="Chorismate synthase AroC"/>
    <property type="match status" value="1"/>
</dbReference>
<dbReference type="HAMAP" id="MF_00300">
    <property type="entry name" value="Chorismate_synth"/>
    <property type="match status" value="1"/>
</dbReference>
<dbReference type="InterPro" id="IPR000453">
    <property type="entry name" value="Chorismate_synth"/>
</dbReference>
<dbReference type="InterPro" id="IPR035904">
    <property type="entry name" value="Chorismate_synth_AroC_sf"/>
</dbReference>
<dbReference type="InterPro" id="IPR020541">
    <property type="entry name" value="Chorismate_synthase_CS"/>
</dbReference>
<dbReference type="NCBIfam" id="TIGR00033">
    <property type="entry name" value="aroC"/>
    <property type="match status" value="1"/>
</dbReference>
<dbReference type="NCBIfam" id="NF003793">
    <property type="entry name" value="PRK05382.1"/>
    <property type="match status" value="1"/>
</dbReference>
<dbReference type="PANTHER" id="PTHR21085">
    <property type="entry name" value="CHORISMATE SYNTHASE"/>
    <property type="match status" value="1"/>
</dbReference>
<dbReference type="PANTHER" id="PTHR21085:SF0">
    <property type="entry name" value="CHORISMATE SYNTHASE"/>
    <property type="match status" value="1"/>
</dbReference>
<dbReference type="Pfam" id="PF01264">
    <property type="entry name" value="Chorismate_synt"/>
    <property type="match status" value="1"/>
</dbReference>
<dbReference type="PIRSF" id="PIRSF001456">
    <property type="entry name" value="Chorismate_synth"/>
    <property type="match status" value="1"/>
</dbReference>
<dbReference type="SUPFAM" id="SSF103263">
    <property type="entry name" value="Chorismate synthase, AroC"/>
    <property type="match status" value="1"/>
</dbReference>
<dbReference type="PROSITE" id="PS00787">
    <property type="entry name" value="CHORISMATE_SYNTHASE_1"/>
    <property type="match status" value="1"/>
</dbReference>
<dbReference type="PROSITE" id="PS00788">
    <property type="entry name" value="CHORISMATE_SYNTHASE_2"/>
    <property type="match status" value="1"/>
</dbReference>
<dbReference type="PROSITE" id="PS00789">
    <property type="entry name" value="CHORISMATE_SYNTHASE_3"/>
    <property type="match status" value="1"/>
</dbReference>